<reference key="1">
    <citation type="submission" date="2006-09" db="EMBL/GenBank/DDBJ databases">
        <title>Complete sequence of chromosome 1 of Shewanella sp. ANA-3.</title>
        <authorList>
            <person name="Copeland A."/>
            <person name="Lucas S."/>
            <person name="Lapidus A."/>
            <person name="Barry K."/>
            <person name="Detter J.C."/>
            <person name="Glavina del Rio T."/>
            <person name="Hammon N."/>
            <person name="Israni S."/>
            <person name="Dalin E."/>
            <person name="Tice H."/>
            <person name="Pitluck S."/>
            <person name="Chertkov O."/>
            <person name="Brettin T."/>
            <person name="Bruce D."/>
            <person name="Han C."/>
            <person name="Tapia R."/>
            <person name="Gilna P."/>
            <person name="Schmutz J."/>
            <person name="Larimer F."/>
            <person name="Land M."/>
            <person name="Hauser L."/>
            <person name="Kyrpides N."/>
            <person name="Kim E."/>
            <person name="Newman D."/>
            <person name="Salticov C."/>
            <person name="Konstantinidis K."/>
            <person name="Klappenback J."/>
            <person name="Tiedje J."/>
            <person name="Richardson P."/>
        </authorList>
    </citation>
    <scope>NUCLEOTIDE SEQUENCE [LARGE SCALE GENOMIC DNA]</scope>
    <source>
        <strain>ANA-3</strain>
    </source>
</reference>
<name>Y2794_SHESA</name>
<comment type="cofactor">
    <cofactor evidence="1">
        <name>Zn(2+)</name>
        <dbReference type="ChEBI" id="CHEBI:29105"/>
    </cofactor>
    <text evidence="1">Binds 3 Zn(2+) ions per subunit.</text>
</comment>
<comment type="similarity">
    <text evidence="1">Belongs to the PHP family.</text>
</comment>
<protein>
    <recommendedName>
        <fullName evidence="1">Probable phosphatase Shewana3_2794</fullName>
        <ecNumber evidence="1">3.1.3.-</ecNumber>
    </recommendedName>
</protein>
<proteinExistence type="inferred from homology"/>
<gene>
    <name type="ordered locus">Shewana3_2794</name>
</gene>
<sequence length="252" mass="27299">MQYPVDTHTHTLASTHAYSTIHDYLAVAKQKGIRLFATTDHGPAMADAPHFWHFVNLRVLPRMVDGVGILRGIEANIKNREGEIDYFGDYLSQLDIVLAGFHEPVFPPSDKATHTEAMINAIKSGKVDIITHPGNPAYPIDIEAVAAAAAEYGVALEINNSSFEVSRKGSEANCTAIAKAAKELGATLVMGSDSHVAFSLGGFDRALSIIEAVDYPKDKLLNRSPMALLNFLTQRGHQSVADLMPLFSDDIA</sequence>
<keyword id="KW-0378">Hydrolase</keyword>
<keyword id="KW-0479">Metal-binding</keyword>
<keyword id="KW-0862">Zinc</keyword>
<evidence type="ECO:0000255" key="1">
    <source>
        <dbReference type="HAMAP-Rule" id="MF_01561"/>
    </source>
</evidence>
<feature type="chain" id="PRO_1000069030" description="Probable phosphatase Shewana3_2794">
    <location>
        <begin position="1"/>
        <end position="252"/>
    </location>
</feature>
<feature type="binding site" evidence="1">
    <location>
        <position position="8"/>
    </location>
    <ligand>
        <name>Zn(2+)</name>
        <dbReference type="ChEBI" id="CHEBI:29105"/>
        <label>1</label>
    </ligand>
</feature>
<feature type="binding site" evidence="1">
    <location>
        <position position="10"/>
    </location>
    <ligand>
        <name>Zn(2+)</name>
        <dbReference type="ChEBI" id="CHEBI:29105"/>
        <label>1</label>
    </ligand>
</feature>
<feature type="binding site" evidence="1">
    <location>
        <position position="16"/>
    </location>
    <ligand>
        <name>Zn(2+)</name>
        <dbReference type="ChEBI" id="CHEBI:29105"/>
        <label>2</label>
    </ligand>
</feature>
<feature type="binding site" evidence="1">
    <location>
        <position position="41"/>
    </location>
    <ligand>
        <name>Zn(2+)</name>
        <dbReference type="ChEBI" id="CHEBI:29105"/>
        <label>2</label>
    </ligand>
</feature>
<feature type="binding site" evidence="1">
    <location>
        <position position="74"/>
    </location>
    <ligand>
        <name>Zn(2+)</name>
        <dbReference type="ChEBI" id="CHEBI:29105"/>
        <label>1</label>
    </ligand>
</feature>
<feature type="binding site" evidence="1">
    <location>
        <position position="74"/>
    </location>
    <ligand>
        <name>Zn(2+)</name>
        <dbReference type="ChEBI" id="CHEBI:29105"/>
        <label>3</label>
    </ligand>
</feature>
<feature type="binding site" evidence="1">
    <location>
        <position position="102"/>
    </location>
    <ligand>
        <name>Zn(2+)</name>
        <dbReference type="ChEBI" id="CHEBI:29105"/>
        <label>3</label>
    </ligand>
</feature>
<feature type="binding site" evidence="1">
    <location>
        <position position="132"/>
    </location>
    <ligand>
        <name>Zn(2+)</name>
        <dbReference type="ChEBI" id="CHEBI:29105"/>
        <label>3</label>
    </ligand>
</feature>
<feature type="binding site" evidence="1">
    <location>
        <position position="193"/>
    </location>
    <ligand>
        <name>Zn(2+)</name>
        <dbReference type="ChEBI" id="CHEBI:29105"/>
        <label>1</label>
    </ligand>
</feature>
<feature type="binding site" evidence="1">
    <location>
        <position position="195"/>
    </location>
    <ligand>
        <name>Zn(2+)</name>
        <dbReference type="ChEBI" id="CHEBI:29105"/>
        <label>2</label>
    </ligand>
</feature>
<accession>A0KZ02</accession>
<dbReference type="EC" id="3.1.3.-" evidence="1"/>
<dbReference type="EMBL" id="CP000469">
    <property type="protein sequence ID" value="ABK49021.1"/>
    <property type="molecule type" value="Genomic_DNA"/>
</dbReference>
<dbReference type="RefSeq" id="WP_011717673.1">
    <property type="nucleotide sequence ID" value="NC_008577.1"/>
</dbReference>
<dbReference type="SMR" id="A0KZ02"/>
<dbReference type="STRING" id="94122.Shewana3_2794"/>
<dbReference type="KEGG" id="shn:Shewana3_2794"/>
<dbReference type="eggNOG" id="COG1387">
    <property type="taxonomic scope" value="Bacteria"/>
</dbReference>
<dbReference type="HOGENOM" id="CLU_061999_0_1_6"/>
<dbReference type="OrthoDB" id="9808747at2"/>
<dbReference type="Proteomes" id="UP000002589">
    <property type="component" value="Chromosome"/>
</dbReference>
<dbReference type="GO" id="GO:0005829">
    <property type="term" value="C:cytosol"/>
    <property type="evidence" value="ECO:0007669"/>
    <property type="project" value="TreeGrafter"/>
</dbReference>
<dbReference type="GO" id="GO:0016791">
    <property type="term" value="F:phosphatase activity"/>
    <property type="evidence" value="ECO:0007669"/>
    <property type="project" value="UniProtKB-UniRule"/>
</dbReference>
<dbReference type="GO" id="GO:0008270">
    <property type="term" value="F:zinc ion binding"/>
    <property type="evidence" value="ECO:0007669"/>
    <property type="project" value="UniProtKB-UniRule"/>
</dbReference>
<dbReference type="GO" id="GO:0071978">
    <property type="term" value="P:bacterial-type flagellum-dependent swarming motility"/>
    <property type="evidence" value="ECO:0007669"/>
    <property type="project" value="TreeGrafter"/>
</dbReference>
<dbReference type="CDD" id="cd07437">
    <property type="entry name" value="PHP_HisPPase_Ycdx_like"/>
    <property type="match status" value="1"/>
</dbReference>
<dbReference type="FunFam" id="3.20.20.140:FF:000008">
    <property type="entry name" value="Probable phosphatase YcdX"/>
    <property type="match status" value="1"/>
</dbReference>
<dbReference type="Gene3D" id="3.20.20.140">
    <property type="entry name" value="Metal-dependent hydrolases"/>
    <property type="match status" value="1"/>
</dbReference>
<dbReference type="HAMAP" id="MF_01561">
    <property type="entry name" value="YcdX_phosphat"/>
    <property type="match status" value="1"/>
</dbReference>
<dbReference type="InterPro" id="IPR023710">
    <property type="entry name" value="Phosphatase_YcdX_put"/>
</dbReference>
<dbReference type="InterPro" id="IPR004013">
    <property type="entry name" value="PHP_dom"/>
</dbReference>
<dbReference type="InterPro" id="IPR050243">
    <property type="entry name" value="PHP_phosphatase"/>
</dbReference>
<dbReference type="InterPro" id="IPR003141">
    <property type="entry name" value="Pol/His_phosphatase_N"/>
</dbReference>
<dbReference type="InterPro" id="IPR016195">
    <property type="entry name" value="Pol/histidinol_Pase-like"/>
</dbReference>
<dbReference type="NCBIfam" id="NF006702">
    <property type="entry name" value="PRK09248.1"/>
    <property type="match status" value="1"/>
</dbReference>
<dbReference type="PANTHER" id="PTHR36928">
    <property type="entry name" value="PHOSPHATASE YCDX-RELATED"/>
    <property type="match status" value="1"/>
</dbReference>
<dbReference type="PANTHER" id="PTHR36928:SF1">
    <property type="entry name" value="PHOSPHATASE YCDX-RELATED"/>
    <property type="match status" value="1"/>
</dbReference>
<dbReference type="Pfam" id="PF02811">
    <property type="entry name" value="PHP"/>
    <property type="match status" value="1"/>
</dbReference>
<dbReference type="SMART" id="SM00481">
    <property type="entry name" value="POLIIIAc"/>
    <property type="match status" value="1"/>
</dbReference>
<dbReference type="SUPFAM" id="SSF89550">
    <property type="entry name" value="PHP domain-like"/>
    <property type="match status" value="1"/>
</dbReference>
<organism>
    <name type="scientific">Shewanella sp. (strain ANA-3)</name>
    <dbReference type="NCBI Taxonomy" id="94122"/>
    <lineage>
        <taxon>Bacteria</taxon>
        <taxon>Pseudomonadati</taxon>
        <taxon>Pseudomonadota</taxon>
        <taxon>Gammaproteobacteria</taxon>
        <taxon>Alteromonadales</taxon>
        <taxon>Shewanellaceae</taxon>
        <taxon>Shewanella</taxon>
    </lineage>
</organism>